<feature type="chain" id="PRO_0000422069" description="Sulfite efflux pump SSU1">
    <location>
        <begin position="1"/>
        <end position="481"/>
    </location>
</feature>
<feature type="topological domain" description="Cytoplasmic" evidence="2">
    <location>
        <begin position="1"/>
        <end position="108"/>
    </location>
</feature>
<feature type="transmembrane region" description="Helical" evidence="2">
    <location>
        <begin position="109"/>
        <end position="129"/>
    </location>
</feature>
<feature type="topological domain" description="Extracellular" evidence="2">
    <location>
        <begin position="130"/>
        <end position="137"/>
    </location>
</feature>
<feature type="transmembrane region" description="Helical" evidence="2">
    <location>
        <begin position="138"/>
        <end position="158"/>
    </location>
</feature>
<feature type="topological domain" description="Cytoplasmic" evidence="2">
    <location>
        <begin position="159"/>
        <end position="176"/>
    </location>
</feature>
<feature type="transmembrane region" description="Helical" evidence="2">
    <location>
        <begin position="177"/>
        <end position="197"/>
    </location>
</feature>
<feature type="topological domain" description="Extracellular" evidence="2">
    <location>
        <begin position="198"/>
        <end position="204"/>
    </location>
</feature>
<feature type="transmembrane region" description="Helical" evidence="2">
    <location>
        <begin position="205"/>
        <end position="225"/>
    </location>
</feature>
<feature type="topological domain" description="Cytoplasmic" evidence="2">
    <location>
        <begin position="226"/>
        <end position="244"/>
    </location>
</feature>
<feature type="transmembrane region" description="Helical" evidence="2">
    <location>
        <begin position="245"/>
        <end position="265"/>
    </location>
</feature>
<feature type="topological domain" description="Extracellular" evidence="2">
    <location>
        <begin position="266"/>
        <end position="273"/>
    </location>
</feature>
<feature type="transmembrane region" description="Helical" evidence="2">
    <location>
        <begin position="274"/>
        <end position="294"/>
    </location>
</feature>
<feature type="topological domain" description="Cytoplasmic" evidence="2">
    <location>
        <begin position="295"/>
        <end position="312"/>
    </location>
</feature>
<feature type="transmembrane region" description="Helical" evidence="2">
    <location>
        <begin position="313"/>
        <end position="333"/>
    </location>
</feature>
<feature type="topological domain" description="Extracellular" evidence="2">
    <location>
        <begin position="334"/>
        <end position="353"/>
    </location>
</feature>
<feature type="transmembrane region" description="Helical" evidence="2">
    <location>
        <begin position="354"/>
        <end position="374"/>
    </location>
</feature>
<feature type="topological domain" description="Cytoplasmic" evidence="2">
    <location>
        <begin position="375"/>
        <end position="438"/>
    </location>
</feature>
<feature type="transmembrane region" description="Helical" evidence="2">
    <location>
        <begin position="439"/>
        <end position="459"/>
    </location>
</feature>
<feature type="topological domain" description="Extracellular" evidence="2">
    <location>
        <begin position="460"/>
        <end position="481"/>
    </location>
</feature>
<feature type="region of interest" description="Disordered" evidence="3">
    <location>
        <begin position="1"/>
        <end position="71"/>
    </location>
</feature>
<feature type="compositionally biased region" description="Polar residues" evidence="3">
    <location>
        <begin position="15"/>
        <end position="47"/>
    </location>
</feature>
<feature type="compositionally biased region" description="Low complexity" evidence="3">
    <location>
        <begin position="48"/>
        <end position="65"/>
    </location>
</feature>
<sequence length="481" mass="54203">MSSSSHNDNKIPPEKTTTPPLSSSNEDIYNPADSSNVLSSNQTLVSTNNNNNNNQNNNQNNNQNNDGKDTMDHLSYLSTIDSKRREQSYLKSFYQRFIIEDVVKNFTPAYFVSVMGTGISSSLLYNFPFPAYWLQICGYVMFGLTCTFFIGNIILLIMSCAYYPNRFRDYHVDPSRAVFMGAFSMGYITIVNFIALITKGEHIYFVWTLWWLAVFSAMYTSFLIVYLSFMSKLNESDVEAKLNATLLLPIVAITVVSSSGHSIELDLPHVHQTVLTMIVSFMLWSLSISMAFMVMTLYMGRLIIHKIPPTNLIMTSFLPVGFLGQSSYSIYLFGNNLNKFIPEELLYGKISLCLSGFVSVFLLSFGYFMCFVAVTSVLSKIRPFAKNPNPSHTNRFGLLKLEKSFWSMTFPMGTMSLSNTEIGHGGVGNYPLLTFKVMGSIFAAACIFITVGCSIGVVVYSFKKLREDMTNKNKYRNESMV</sequence>
<keyword id="KW-1003">Cell membrane</keyword>
<keyword id="KW-0472">Membrane</keyword>
<keyword id="KW-0597">Phosphoprotein</keyword>
<keyword id="KW-1185">Reference proteome</keyword>
<keyword id="KW-0812">Transmembrane</keyword>
<keyword id="KW-1133">Transmembrane helix</keyword>
<keyword id="KW-0813">Transport</keyword>
<keyword id="KW-0843">Virulence</keyword>
<name>SSU1_CANAL</name>
<gene>
    <name type="primary">SSU1</name>
    <name type="synonym">SSU11</name>
    <name type="ordered locus">CAALFM_CR09170CA</name>
    <name type="ORF">CaO19.7313</name>
</gene>
<organism>
    <name type="scientific">Candida albicans (strain SC5314 / ATCC MYA-2876)</name>
    <name type="common">Yeast</name>
    <dbReference type="NCBI Taxonomy" id="237561"/>
    <lineage>
        <taxon>Eukaryota</taxon>
        <taxon>Fungi</taxon>
        <taxon>Dikarya</taxon>
        <taxon>Ascomycota</taxon>
        <taxon>Saccharomycotina</taxon>
        <taxon>Pichiomycetes</taxon>
        <taxon>Debaryomycetaceae</taxon>
        <taxon>Candida/Lodderomyces clade</taxon>
        <taxon>Candida</taxon>
    </lineage>
</organism>
<evidence type="ECO:0000250" key="1"/>
<evidence type="ECO:0000255" key="2"/>
<evidence type="ECO:0000256" key="3">
    <source>
        <dbReference type="SAM" id="MobiDB-lite"/>
    </source>
</evidence>
<evidence type="ECO:0000269" key="4">
    <source>
    </source>
</evidence>
<evidence type="ECO:0000269" key="5">
    <source>
    </source>
</evidence>
<evidence type="ECO:0000269" key="6">
    <source>
    </source>
</evidence>
<evidence type="ECO:0000269" key="7">
    <source>
    </source>
</evidence>
<evidence type="ECO:0000269" key="8">
    <source>
    </source>
</evidence>
<evidence type="ECO:0000269" key="9">
    <source>
    </source>
</evidence>
<evidence type="ECO:0000269" key="10">
    <source>
    </source>
</evidence>
<evidence type="ECO:0000305" key="11"/>
<protein>
    <recommendedName>
        <fullName>Sulfite efflux pump SSU1</fullName>
    </recommendedName>
    <alternativeName>
        <fullName>Sulfite sensitivity protein SSU1</fullName>
    </alternativeName>
</protein>
<dbReference type="EMBL" id="CP017630">
    <property type="protein sequence ID" value="AOW31582.1"/>
    <property type="molecule type" value="Genomic_DNA"/>
</dbReference>
<dbReference type="RefSeq" id="XP_716447.1">
    <property type="nucleotide sequence ID" value="XM_711354.1"/>
</dbReference>
<dbReference type="FunCoup" id="Q5A3Z6">
    <property type="interactions" value="46"/>
</dbReference>
<dbReference type="STRING" id="237561.Q5A3Z6"/>
<dbReference type="EnsemblFungi" id="CR_09170C_A-T">
    <property type="protein sequence ID" value="CR_09170C_A-T-p1"/>
    <property type="gene ID" value="CR_09170C_A"/>
</dbReference>
<dbReference type="GeneID" id="3641882"/>
<dbReference type="KEGG" id="cal:CAALFM_CR09170CA"/>
<dbReference type="CGD" id="CAL0000176038">
    <property type="gene designation" value="SSU1"/>
</dbReference>
<dbReference type="VEuPathDB" id="FungiDB:CR_09170C_A"/>
<dbReference type="eggNOG" id="ENOG502QT02">
    <property type="taxonomic scope" value="Eukaryota"/>
</dbReference>
<dbReference type="HOGENOM" id="CLU_030057_6_2_1"/>
<dbReference type="InParanoid" id="Q5A3Z6"/>
<dbReference type="OMA" id="LGPNWYA"/>
<dbReference type="OrthoDB" id="1099at2759"/>
<dbReference type="Proteomes" id="UP000000559">
    <property type="component" value="Chromosome R"/>
</dbReference>
<dbReference type="GO" id="GO:0005886">
    <property type="term" value="C:plasma membrane"/>
    <property type="evidence" value="ECO:0000318"/>
    <property type="project" value="GO_Central"/>
</dbReference>
<dbReference type="GO" id="GO:0000319">
    <property type="term" value="F:sulfite transmembrane transporter activity"/>
    <property type="evidence" value="ECO:0000318"/>
    <property type="project" value="GO_Central"/>
</dbReference>
<dbReference type="GO" id="GO:0009267">
    <property type="term" value="P:cellular response to starvation"/>
    <property type="evidence" value="ECO:0000315"/>
    <property type="project" value="CGD"/>
</dbReference>
<dbReference type="GO" id="GO:0030447">
    <property type="term" value="P:filamentous growth"/>
    <property type="evidence" value="ECO:0000315"/>
    <property type="project" value="CGD"/>
</dbReference>
<dbReference type="GO" id="GO:0036180">
    <property type="term" value="P:filamentous growth of a population of unicellular organisms in response to biotic stimulus"/>
    <property type="evidence" value="ECO:0000315"/>
    <property type="project" value="CGD"/>
</dbReference>
<dbReference type="GO" id="GO:0036170">
    <property type="term" value="P:filamentous growth of a population of unicellular organisms in response to starvation"/>
    <property type="evidence" value="ECO:0000315"/>
    <property type="project" value="CGD"/>
</dbReference>
<dbReference type="GO" id="GO:0000316">
    <property type="term" value="P:sulfite transmembrane transport"/>
    <property type="evidence" value="ECO:0000318"/>
    <property type="project" value="GO_Central"/>
</dbReference>
<dbReference type="CDD" id="cd09318">
    <property type="entry name" value="TDT_SSU1"/>
    <property type="match status" value="1"/>
</dbReference>
<dbReference type="FunFam" id="1.50.10.150:FF:000004">
    <property type="entry name" value="Malic acid transporter"/>
    <property type="match status" value="1"/>
</dbReference>
<dbReference type="Gene3D" id="1.50.10.150">
    <property type="entry name" value="Voltage-dependent anion channel"/>
    <property type="match status" value="1"/>
</dbReference>
<dbReference type="InterPro" id="IPR004695">
    <property type="entry name" value="SLAC1/Mae1/Ssu1/TehA"/>
</dbReference>
<dbReference type="InterPro" id="IPR051629">
    <property type="entry name" value="Sulfite_efflux_TDT"/>
</dbReference>
<dbReference type="InterPro" id="IPR038665">
    <property type="entry name" value="Voltage-dep_anion_channel_sf"/>
</dbReference>
<dbReference type="PANTHER" id="PTHR31686">
    <property type="match status" value="1"/>
</dbReference>
<dbReference type="PANTHER" id="PTHR31686:SF1">
    <property type="entry name" value="SULFITE EFFLUX PUMP SSU1"/>
    <property type="match status" value="1"/>
</dbReference>
<dbReference type="Pfam" id="PF03595">
    <property type="entry name" value="SLAC1"/>
    <property type="match status" value="1"/>
</dbReference>
<accession>Q5A3Z6</accession>
<accession>A0A1D8PTW4</accession>
<reference key="1">
    <citation type="journal article" date="2004" name="Proc. Natl. Acad. Sci. U.S.A.">
        <title>The diploid genome sequence of Candida albicans.</title>
        <authorList>
            <person name="Jones T."/>
            <person name="Federspiel N.A."/>
            <person name="Chibana H."/>
            <person name="Dungan J."/>
            <person name="Kalman S."/>
            <person name="Magee B.B."/>
            <person name="Newport G."/>
            <person name="Thorstenson Y.R."/>
            <person name="Agabian N."/>
            <person name="Magee P.T."/>
            <person name="Davis R.W."/>
            <person name="Scherer S."/>
        </authorList>
    </citation>
    <scope>NUCLEOTIDE SEQUENCE [LARGE SCALE GENOMIC DNA]</scope>
    <source>
        <strain>SC5314 / ATCC MYA-2876</strain>
    </source>
</reference>
<reference key="2">
    <citation type="journal article" date="2007" name="Genome Biol.">
        <title>Assembly of the Candida albicans genome into sixteen supercontigs aligned on the eight chromosomes.</title>
        <authorList>
            <person name="van het Hoog M."/>
            <person name="Rast T.J."/>
            <person name="Martchenko M."/>
            <person name="Grindle S."/>
            <person name="Dignard D."/>
            <person name="Hogues H."/>
            <person name="Cuomo C."/>
            <person name="Berriman M."/>
            <person name="Scherer S."/>
            <person name="Magee B.B."/>
            <person name="Whiteway M."/>
            <person name="Chibana H."/>
            <person name="Nantel A."/>
            <person name="Magee P.T."/>
        </authorList>
    </citation>
    <scope>GENOME REANNOTATION</scope>
    <source>
        <strain>SC5314 / ATCC MYA-2876</strain>
    </source>
</reference>
<reference key="3">
    <citation type="journal article" date="2013" name="Genome Biol.">
        <title>Assembly of a phased diploid Candida albicans genome facilitates allele-specific measurements and provides a simple model for repeat and indel structure.</title>
        <authorList>
            <person name="Muzzey D."/>
            <person name="Schwartz K."/>
            <person name="Weissman J.S."/>
            <person name="Sherlock G."/>
        </authorList>
    </citation>
    <scope>NUCLEOTIDE SEQUENCE [LARGE SCALE GENOMIC DNA]</scope>
    <scope>GENOME REANNOTATION</scope>
    <source>
        <strain>SC5314 / ATCC MYA-2876</strain>
    </source>
</reference>
<reference key="4">
    <citation type="journal article" date="2003" name="EMBO J.">
        <title>Haploinsufficiency-based large-scale forward genetic analysis of filamentous growth in the diploid human fungal pathogen C.albicans.</title>
        <authorList>
            <person name="Uhl M.A."/>
            <person name="Biery M."/>
            <person name="Craig N."/>
            <person name="Johnson A.D."/>
        </authorList>
    </citation>
    <scope>FUNCTION</scope>
</reference>
<reference key="5">
    <citation type="journal article" date="2005" name="Eukaryot. Cell">
        <title>Global role of the protein kinase Gcn2 in the human pathogen Candida albicans.</title>
        <authorList>
            <person name="Tournu H."/>
            <person name="Tripathi G."/>
            <person name="Bertram G."/>
            <person name="Macaskill S."/>
            <person name="Mavor A."/>
            <person name="Walker L."/>
            <person name="Odds F.C."/>
            <person name="Gow N.A."/>
            <person name="Brown A.J."/>
        </authorList>
    </citation>
    <scope>INDUCTION</scope>
</reference>
<reference key="6">
    <citation type="journal article" date="2005" name="Mol. Biol. Cell">
        <title>Transcriptional response of Candida albicans to nitric oxide and the role of the YHB1 gene in nitrosative stress and virulence.</title>
        <authorList>
            <person name="Hromatka B.S."/>
            <person name="Noble S.M."/>
            <person name="Johnson A.D."/>
        </authorList>
    </citation>
    <scope>INDUCTION</scope>
</reference>
<reference key="7">
    <citation type="journal article" date="2007" name="Mol. Microbiol.">
        <title>Deletion of the high-affinity cAMP phosphodiesterase encoded by PDE2 affects stress responses and virulence in Candida albicans.</title>
        <authorList>
            <person name="Wilson D."/>
            <person name="Tutulan-Cunita A."/>
            <person name="Jung W."/>
            <person name="Hauser N.C."/>
            <person name="Hernandez R."/>
            <person name="Williamson T."/>
            <person name="Piekarska K."/>
            <person name="Rupp S."/>
            <person name="Young T."/>
            <person name="Stateva L."/>
        </authorList>
    </citation>
    <scope>INDUCTION</scope>
</reference>
<reference key="8">
    <citation type="journal article" date="2008" name="Eukaryot. Cell">
        <title>CTA4 transcription factor mediates induction of nitrosative stress response in Candida albicans.</title>
        <authorList>
            <person name="Chiranand W."/>
            <person name="McLeod I."/>
            <person name="Zhou H."/>
            <person name="Lynn J.J."/>
            <person name="Vega L.A."/>
            <person name="Myers H."/>
            <person name="Yates J.R. III"/>
            <person name="Lorenz M.C."/>
            <person name="Gustin M.C."/>
        </authorList>
    </citation>
    <scope>FUNCTION</scope>
</reference>
<reference key="9">
    <citation type="journal article" date="2012" name="PLoS ONE">
        <title>Cellular responses of Candida albicans to phagocytosis and the extracellular activities of neutrophils are critical to counteract carbohydrate starvation, oxidative and nitrosative stress.</title>
        <authorList>
            <person name="Miramon P."/>
            <person name="Dunker C."/>
            <person name="Windecker H."/>
            <person name="Bohovych I.M."/>
            <person name="Brown A.J."/>
            <person name="Kurzai O."/>
            <person name="Hube B."/>
        </authorList>
    </citation>
    <scope>INDUCTION</scope>
    <scope>FUNCTION</scope>
</reference>
<reference key="10">
    <citation type="journal article" date="2013" name="Eukaryot. Cell">
        <title>Factors supporting cysteine tolerance and sulfite production in Candida albicans.</title>
        <authorList>
            <person name="Hennicke F."/>
            <person name="Grumbt M."/>
            <person name="Lermann U."/>
            <person name="Ueberschaar N."/>
            <person name="Palige K."/>
            <person name="Bottcher B."/>
            <person name="Jacobsen I.D."/>
            <person name="Staib C."/>
            <person name="Morschhauser J."/>
            <person name="Monod M."/>
            <person name="Hube B."/>
            <person name="Hertweck C."/>
            <person name="Staib P."/>
        </authorList>
    </citation>
    <scope>FUNCTION</scope>
    <scope>INDUCTION</scope>
    <scope>DISRUPTION PHENOTYPE</scope>
</reference>
<comment type="function">
    <text evidence="1 4 8 9 10">Sulfite efflux pump required for the secretion of sulfite as a reducing agent (By similarity). Plays a role in resistance to neutrophils during infection. Involved in transition to filamentous growth, which is believed to be central to the virulence of this human pathogen.</text>
</comment>
<comment type="subcellular location">
    <subcellularLocation>
        <location evidence="1">Cell membrane</location>
        <topology evidence="1">Multi-pass membrane protein</topology>
    </subcellularLocation>
</comment>
<comment type="induction">
    <text evidence="5 6 7 9 10">Up-regulated by cysteine, nitic oxide, and in response to neutrophil phagocytosis. Expression is under the control of GCN2, GCN4 and ZCF2.</text>
</comment>
<comment type="disruption phenotype">
    <text evidence="10">Leads to enhanced sensitivity to both cysteine and sulfite.</text>
</comment>
<comment type="similarity">
    <text evidence="11">Belongs to the tellurite-resistance/dicarboxylate transporter (TDT) family.</text>
</comment>
<proteinExistence type="evidence at transcript level"/>